<protein>
    <recommendedName>
        <fullName>Ribonuclease pancreatic</fullName>
        <ecNumber>4.6.1.18</ecNumber>
    </recommendedName>
    <alternativeName>
        <fullName>RNase 1</fullName>
    </alternativeName>
    <alternativeName>
        <fullName>RNase A</fullName>
    </alternativeName>
</protein>
<proteinExistence type="inferred from homology"/>
<accession>Q8VD83</accession>
<keyword id="KW-1015">Disulfide bond</keyword>
<keyword id="KW-0255">Endonuclease</keyword>
<keyword id="KW-0378">Hydrolase</keyword>
<keyword id="KW-0456">Lyase</keyword>
<keyword id="KW-0540">Nuclease</keyword>
<keyword id="KW-0964">Secreted</keyword>
<keyword id="KW-0732">Signal</keyword>
<dbReference type="EC" id="4.6.1.18"/>
<dbReference type="EMBL" id="AJ315453">
    <property type="protein sequence ID" value="CAC86434.1"/>
    <property type="molecule type" value="Genomic_DNA"/>
</dbReference>
<dbReference type="SMR" id="Q8VD83"/>
<dbReference type="GO" id="GO:0005576">
    <property type="term" value="C:extracellular region"/>
    <property type="evidence" value="ECO:0007669"/>
    <property type="project" value="UniProtKB-SubCell"/>
</dbReference>
<dbReference type="GO" id="GO:0016829">
    <property type="term" value="F:lyase activity"/>
    <property type="evidence" value="ECO:0007669"/>
    <property type="project" value="UniProtKB-KW"/>
</dbReference>
<dbReference type="GO" id="GO:0003676">
    <property type="term" value="F:nucleic acid binding"/>
    <property type="evidence" value="ECO:0007669"/>
    <property type="project" value="InterPro"/>
</dbReference>
<dbReference type="GO" id="GO:0004522">
    <property type="term" value="F:ribonuclease A activity"/>
    <property type="evidence" value="ECO:0007669"/>
    <property type="project" value="UniProtKB-EC"/>
</dbReference>
<dbReference type="GO" id="GO:0050830">
    <property type="term" value="P:defense response to Gram-positive bacterium"/>
    <property type="evidence" value="ECO:0007669"/>
    <property type="project" value="TreeGrafter"/>
</dbReference>
<dbReference type="CDD" id="cd06265">
    <property type="entry name" value="RNase_A_canonical"/>
    <property type="match status" value="1"/>
</dbReference>
<dbReference type="FunFam" id="3.10.130.10:FF:000001">
    <property type="entry name" value="Ribonuclease pancreatic"/>
    <property type="match status" value="1"/>
</dbReference>
<dbReference type="Gene3D" id="3.10.130.10">
    <property type="entry name" value="Ribonuclease A-like domain"/>
    <property type="match status" value="1"/>
</dbReference>
<dbReference type="InterPro" id="IPR001427">
    <property type="entry name" value="RNaseA"/>
</dbReference>
<dbReference type="InterPro" id="IPR036816">
    <property type="entry name" value="RNaseA-like_dom_sf"/>
</dbReference>
<dbReference type="InterPro" id="IPR023411">
    <property type="entry name" value="RNaseA_AS"/>
</dbReference>
<dbReference type="InterPro" id="IPR023412">
    <property type="entry name" value="RNaseA_domain"/>
</dbReference>
<dbReference type="PANTHER" id="PTHR11437">
    <property type="entry name" value="RIBONUCLEASE"/>
    <property type="match status" value="1"/>
</dbReference>
<dbReference type="PANTHER" id="PTHR11437:SF24">
    <property type="entry name" value="RIBONUCLEASE PANCREATIC"/>
    <property type="match status" value="1"/>
</dbReference>
<dbReference type="Pfam" id="PF00074">
    <property type="entry name" value="RnaseA"/>
    <property type="match status" value="1"/>
</dbReference>
<dbReference type="PRINTS" id="PR00794">
    <property type="entry name" value="RIBONUCLEASE"/>
</dbReference>
<dbReference type="SMART" id="SM00092">
    <property type="entry name" value="RNAse_Pc"/>
    <property type="match status" value="1"/>
</dbReference>
<dbReference type="SUPFAM" id="SSF54076">
    <property type="entry name" value="RNase A-like"/>
    <property type="match status" value="1"/>
</dbReference>
<dbReference type="PROSITE" id="PS00127">
    <property type="entry name" value="RNASE_PANCREATIC"/>
    <property type="match status" value="1"/>
</dbReference>
<organism>
    <name type="scientific">Sundamys muelleri</name>
    <name type="common">Mueller's giant sunda rat</name>
    <dbReference type="NCBI Taxonomy" id="83761"/>
    <lineage>
        <taxon>Eukaryota</taxon>
        <taxon>Metazoa</taxon>
        <taxon>Chordata</taxon>
        <taxon>Craniata</taxon>
        <taxon>Vertebrata</taxon>
        <taxon>Euteleostomi</taxon>
        <taxon>Mammalia</taxon>
        <taxon>Eutheria</taxon>
        <taxon>Euarchontoglires</taxon>
        <taxon>Glires</taxon>
        <taxon>Rodentia</taxon>
        <taxon>Myomorpha</taxon>
        <taxon>Muroidea</taxon>
        <taxon>Muridae</taxon>
        <taxon>Murinae</taxon>
        <taxon>Sundamys</taxon>
    </lineage>
</organism>
<name>RNAS1_SUNME</name>
<feature type="signal peptide" evidence="2">
    <location>
        <begin position="1"/>
        <end position="25"/>
    </location>
</feature>
<feature type="chain" id="PRO_0000254945" description="Ribonuclease pancreatic">
    <location>
        <begin position="26"/>
        <end position="149"/>
    </location>
</feature>
<feature type="region of interest" description="Disordered" evidence="3">
    <location>
        <begin position="25"/>
        <end position="62"/>
    </location>
</feature>
<feature type="compositionally biased region" description="Basic and acidic residues" evidence="3">
    <location>
        <begin position="28"/>
        <end position="42"/>
    </location>
</feature>
<feature type="compositionally biased region" description="Polar residues" evidence="3">
    <location>
        <begin position="43"/>
        <end position="61"/>
    </location>
</feature>
<feature type="active site" description="Proton acceptor" evidence="1">
    <location>
        <position position="37"/>
    </location>
</feature>
<feature type="active site" description="Proton donor" evidence="1">
    <location>
        <position position="144"/>
    </location>
</feature>
<feature type="binding site" evidence="1">
    <location>
        <position position="32"/>
    </location>
    <ligand>
        <name>substrate</name>
    </ligand>
</feature>
<feature type="binding site" evidence="1">
    <location>
        <position position="35"/>
    </location>
    <ligand>
        <name>substrate</name>
    </ligand>
</feature>
<feature type="binding site" evidence="1">
    <location>
        <begin position="66"/>
        <end position="70"/>
    </location>
    <ligand>
        <name>substrate</name>
    </ligand>
</feature>
<feature type="binding site" evidence="1">
    <location>
        <position position="91"/>
    </location>
    <ligand>
        <name>substrate</name>
    </ligand>
</feature>
<feature type="disulfide bond" evidence="1">
    <location>
        <begin position="51"/>
        <end position="109"/>
    </location>
</feature>
<feature type="disulfide bond" evidence="1">
    <location>
        <begin position="65"/>
        <end position="120"/>
    </location>
</feature>
<feature type="disulfide bond" evidence="1">
    <location>
        <begin position="83"/>
        <end position="135"/>
    </location>
</feature>
<feature type="disulfide bond" evidence="1">
    <location>
        <begin position="90"/>
        <end position="97"/>
    </location>
</feature>
<feature type="unsure residue">
    <location>
        <position position="120"/>
    </location>
</feature>
<gene>
    <name type="primary">RNASE1</name>
</gene>
<sequence length="149" mass="16446">MGLENSLILFSLLVLVLGWVQPSLGKESSPDKFKRQHMDTEGSSKSSPTYCNQMRSPQEMTKGSCKPVNTFLHEPLEDVQAICSQDKVTCKDGKSNCHKSSSTLHITDCCLKGSSNYPKCNYTTTESQKHIIIACDGNPYVPVHFDASV</sequence>
<evidence type="ECO:0000250" key="1"/>
<evidence type="ECO:0000255" key="2"/>
<evidence type="ECO:0000256" key="3">
    <source>
        <dbReference type="SAM" id="MobiDB-lite"/>
    </source>
</evidence>
<evidence type="ECO:0000305" key="4"/>
<reference key="1">
    <citation type="journal article" date="2002" name="J. Mol. Evol.">
        <title>Pancreatic-type ribonuclease 1 gene duplications in rat species.</title>
        <authorList>
            <person name="Dubois J.-Y.F."/>
            <person name="Jekel P.A."/>
            <person name="Mulder P.P.M.F.A."/>
            <person name="Bussink A.P."/>
            <person name="Catzeflis F.M."/>
            <person name="Carsana A."/>
            <person name="Beintema J.J."/>
        </authorList>
    </citation>
    <scope>NUCLEOTIDE SEQUENCE [GENOMIC DNA]</scope>
</reference>
<comment type="function">
    <text evidence="1">Endonuclease that catalyzes the cleavage of RNA on the 3' side of pyrimidine nucleotides. Acts on single-stranded and double-stranded RNA (By similarity).</text>
</comment>
<comment type="catalytic activity">
    <reaction>
        <text>an [RNA] containing cytidine + H2O = an [RNA]-3'-cytidine-3'-phosphate + a 5'-hydroxy-ribonucleotide-3'-[RNA].</text>
        <dbReference type="EC" id="4.6.1.18"/>
    </reaction>
</comment>
<comment type="catalytic activity">
    <reaction>
        <text>an [RNA] containing uridine + H2O = an [RNA]-3'-uridine-3'-phosphate + a 5'-hydroxy-ribonucleotide-3'-[RNA].</text>
        <dbReference type="EC" id="4.6.1.18"/>
    </reaction>
</comment>
<comment type="subunit">
    <text evidence="1">Monomer. Interacts with and forms tight 1:1 complexes with RNH1. Dimerization of two such complexes may occur. Interaction with RNH1 inhibits this protein (By similarity).</text>
</comment>
<comment type="subcellular location">
    <subcellularLocation>
        <location>Secreted</location>
    </subcellularLocation>
</comment>
<comment type="similarity">
    <text evidence="4">Belongs to the pancreatic ribonuclease family.</text>
</comment>